<dbReference type="EC" id="4.2.1.19" evidence="1"/>
<dbReference type="EMBL" id="CP000009">
    <property type="protein sequence ID" value="AAW60259.1"/>
    <property type="molecule type" value="Genomic_DNA"/>
</dbReference>
<dbReference type="RefSeq" id="WP_011252060.1">
    <property type="nucleotide sequence ID" value="NC_006677.1"/>
</dbReference>
<dbReference type="SMR" id="Q5FTN7"/>
<dbReference type="STRING" id="290633.GOX0479"/>
<dbReference type="KEGG" id="gox:GOX0479"/>
<dbReference type="eggNOG" id="COG0131">
    <property type="taxonomic scope" value="Bacteria"/>
</dbReference>
<dbReference type="HOGENOM" id="CLU_044308_3_0_5"/>
<dbReference type="UniPathway" id="UPA00031">
    <property type="reaction ID" value="UER00011"/>
</dbReference>
<dbReference type="Proteomes" id="UP000006375">
    <property type="component" value="Chromosome"/>
</dbReference>
<dbReference type="GO" id="GO:0005737">
    <property type="term" value="C:cytoplasm"/>
    <property type="evidence" value="ECO:0007669"/>
    <property type="project" value="UniProtKB-SubCell"/>
</dbReference>
<dbReference type="GO" id="GO:0004424">
    <property type="term" value="F:imidazoleglycerol-phosphate dehydratase activity"/>
    <property type="evidence" value="ECO:0007669"/>
    <property type="project" value="UniProtKB-UniRule"/>
</dbReference>
<dbReference type="GO" id="GO:0000105">
    <property type="term" value="P:L-histidine biosynthetic process"/>
    <property type="evidence" value="ECO:0007669"/>
    <property type="project" value="UniProtKB-UniRule"/>
</dbReference>
<dbReference type="CDD" id="cd07914">
    <property type="entry name" value="IGPD"/>
    <property type="match status" value="1"/>
</dbReference>
<dbReference type="FunFam" id="3.30.230.40:FF:000001">
    <property type="entry name" value="Imidazoleglycerol-phosphate dehydratase HisB"/>
    <property type="match status" value="1"/>
</dbReference>
<dbReference type="FunFam" id="3.30.230.40:FF:000003">
    <property type="entry name" value="Imidazoleglycerol-phosphate dehydratase HisB"/>
    <property type="match status" value="1"/>
</dbReference>
<dbReference type="Gene3D" id="3.30.230.40">
    <property type="entry name" value="Imidazole glycerol phosphate dehydratase, domain 1"/>
    <property type="match status" value="2"/>
</dbReference>
<dbReference type="HAMAP" id="MF_00076">
    <property type="entry name" value="HisB"/>
    <property type="match status" value="1"/>
</dbReference>
<dbReference type="InterPro" id="IPR038494">
    <property type="entry name" value="IGPD_sf"/>
</dbReference>
<dbReference type="InterPro" id="IPR000807">
    <property type="entry name" value="ImidazoleglycerolP_deHydtase"/>
</dbReference>
<dbReference type="InterPro" id="IPR020565">
    <property type="entry name" value="ImidazoleglycerP_deHydtase_CS"/>
</dbReference>
<dbReference type="InterPro" id="IPR020568">
    <property type="entry name" value="Ribosomal_Su5_D2-typ_SF"/>
</dbReference>
<dbReference type="NCBIfam" id="NF002109">
    <property type="entry name" value="PRK00951.1-5"/>
    <property type="match status" value="1"/>
</dbReference>
<dbReference type="NCBIfam" id="NF002111">
    <property type="entry name" value="PRK00951.2-1"/>
    <property type="match status" value="1"/>
</dbReference>
<dbReference type="NCBIfam" id="NF002114">
    <property type="entry name" value="PRK00951.2-4"/>
    <property type="match status" value="1"/>
</dbReference>
<dbReference type="PANTHER" id="PTHR23133:SF2">
    <property type="entry name" value="IMIDAZOLEGLYCEROL-PHOSPHATE DEHYDRATASE"/>
    <property type="match status" value="1"/>
</dbReference>
<dbReference type="PANTHER" id="PTHR23133">
    <property type="entry name" value="IMIDAZOLEGLYCEROL-PHOSPHATE DEHYDRATASE HIS7"/>
    <property type="match status" value="1"/>
</dbReference>
<dbReference type="Pfam" id="PF00475">
    <property type="entry name" value="IGPD"/>
    <property type="match status" value="1"/>
</dbReference>
<dbReference type="SUPFAM" id="SSF54211">
    <property type="entry name" value="Ribosomal protein S5 domain 2-like"/>
    <property type="match status" value="2"/>
</dbReference>
<dbReference type="PROSITE" id="PS00954">
    <property type="entry name" value="IGP_DEHYDRATASE_1"/>
    <property type="match status" value="1"/>
</dbReference>
<dbReference type="PROSITE" id="PS00955">
    <property type="entry name" value="IGP_DEHYDRATASE_2"/>
    <property type="match status" value="1"/>
</dbReference>
<accession>Q5FTN7</accession>
<protein>
    <recommendedName>
        <fullName evidence="1">Imidazoleglycerol-phosphate dehydratase</fullName>
        <shortName evidence="1">IGPD</shortName>
        <ecNumber evidence="1">4.2.1.19</ecNumber>
    </recommendedName>
</protein>
<gene>
    <name evidence="1" type="primary">hisB</name>
    <name type="ordered locus">GOX0479</name>
</gene>
<name>HIS7_GLUOX</name>
<organism>
    <name type="scientific">Gluconobacter oxydans (strain 621H)</name>
    <name type="common">Gluconobacter suboxydans</name>
    <dbReference type="NCBI Taxonomy" id="290633"/>
    <lineage>
        <taxon>Bacteria</taxon>
        <taxon>Pseudomonadati</taxon>
        <taxon>Pseudomonadota</taxon>
        <taxon>Alphaproteobacteria</taxon>
        <taxon>Acetobacterales</taxon>
        <taxon>Acetobacteraceae</taxon>
        <taxon>Gluconobacter</taxon>
    </lineage>
</organism>
<reference key="1">
    <citation type="journal article" date="2005" name="Nat. Biotechnol.">
        <title>Complete genome sequence of the acetic acid bacterium Gluconobacter oxydans.</title>
        <authorList>
            <person name="Prust C."/>
            <person name="Hoffmeister M."/>
            <person name="Liesegang H."/>
            <person name="Wiezer A."/>
            <person name="Fricke W.F."/>
            <person name="Ehrenreich A."/>
            <person name="Gottschalk G."/>
            <person name="Deppenmeier U."/>
        </authorList>
    </citation>
    <scope>NUCLEOTIDE SEQUENCE [LARGE SCALE GENOMIC DNA]</scope>
    <source>
        <strain>621H</strain>
    </source>
</reference>
<sequence>MNESRHARLHRATSETDITLALTLDGQGRSDVDSGIGFFDHMLTALAKHGGFDLELKAKGDLHIDGHHTVEDVGIVFGQAFRQAIGDKRGIERFGHALVPLDEALCEAVVDISGRPYLAWNVVFPREKIGTMDTELFEEFFRAFAMSAHIALHLTCKSGTNAHHIAESGFKAVARALKVAVSHDPRSAGAIPSTKGVL</sequence>
<comment type="catalytic activity">
    <reaction evidence="1">
        <text>D-erythro-1-(imidazol-4-yl)glycerol 3-phosphate = 3-(imidazol-4-yl)-2-oxopropyl phosphate + H2O</text>
        <dbReference type="Rhea" id="RHEA:11040"/>
        <dbReference type="ChEBI" id="CHEBI:15377"/>
        <dbReference type="ChEBI" id="CHEBI:57766"/>
        <dbReference type="ChEBI" id="CHEBI:58278"/>
        <dbReference type="EC" id="4.2.1.19"/>
    </reaction>
</comment>
<comment type="pathway">
    <text evidence="1">Amino-acid biosynthesis; L-histidine biosynthesis; L-histidine from 5-phospho-alpha-D-ribose 1-diphosphate: step 6/9.</text>
</comment>
<comment type="subcellular location">
    <subcellularLocation>
        <location evidence="1">Cytoplasm</location>
    </subcellularLocation>
</comment>
<comment type="similarity">
    <text evidence="1">Belongs to the imidazoleglycerol-phosphate dehydratase family.</text>
</comment>
<keyword id="KW-0028">Amino-acid biosynthesis</keyword>
<keyword id="KW-0963">Cytoplasm</keyword>
<keyword id="KW-0368">Histidine biosynthesis</keyword>
<keyword id="KW-0456">Lyase</keyword>
<keyword id="KW-1185">Reference proteome</keyword>
<proteinExistence type="inferred from homology"/>
<evidence type="ECO:0000255" key="1">
    <source>
        <dbReference type="HAMAP-Rule" id="MF_00076"/>
    </source>
</evidence>
<feature type="chain" id="PRO_1000071202" description="Imidazoleglycerol-phosphate dehydratase">
    <location>
        <begin position="1"/>
        <end position="198"/>
    </location>
</feature>